<protein>
    <recommendedName>
        <fullName>Oxygen sensor histidine kinase NreB</fullName>
        <ecNumber>2.7.13.3</ecNumber>
    </recommendedName>
    <alternativeName>
        <fullName>Nitrogen regulation protein B</fullName>
    </alternativeName>
</protein>
<accession>A6QJN2</accession>
<keyword id="KW-0004">4Fe-4S</keyword>
<keyword id="KW-0067">ATP-binding</keyword>
<keyword id="KW-0963">Cytoplasm</keyword>
<keyword id="KW-0408">Iron</keyword>
<keyword id="KW-0411">Iron-sulfur</keyword>
<keyword id="KW-0418">Kinase</keyword>
<keyword id="KW-0479">Metal-binding</keyword>
<keyword id="KW-0547">Nucleotide-binding</keyword>
<keyword id="KW-0597">Phosphoprotein</keyword>
<keyword id="KW-0808">Transferase</keyword>
<keyword id="KW-0902">Two-component regulatory system</keyword>
<evidence type="ECO:0000250" key="1"/>
<evidence type="ECO:0000255" key="2"/>
<evidence type="ECO:0000255" key="3">
    <source>
        <dbReference type="PROSITE-ProRule" id="PRU00107"/>
    </source>
</evidence>
<evidence type="ECO:0000305" key="4"/>
<proteinExistence type="inferred from homology"/>
<comment type="function">
    <text evidence="1">Member of the two-component regulatory system NreB/NreC involved in the control of dissimilatory nitrate/nitrite reduction in response to oxygen. NreB functions as a direct oxygen sensor histidine kinase which is autophosphorylated, in the absence of oxygen, probably at the conserved histidine residue, and transfers its phosphate group probably to a conserved aspartate residue of NreC. NreB/NreC activates the expression of the nitrate (narGHJI) and nitrite (nir) reductase operons, as well as the putative nitrate transporter gene narT (By similarity).</text>
</comment>
<comment type="catalytic activity">
    <reaction>
        <text>ATP + protein L-histidine = ADP + protein N-phospho-L-histidine.</text>
        <dbReference type="EC" id="2.7.13.3"/>
    </reaction>
</comment>
<comment type="cofactor">
    <cofactor evidence="4">
        <name>[4Fe-4S] cluster</name>
        <dbReference type="ChEBI" id="CHEBI:49883"/>
    </cofactor>
    <text evidence="4">Binds 1 [4Fe-4S] cluster.</text>
</comment>
<comment type="subcellular location">
    <subcellularLocation>
        <location evidence="4">Cytoplasm</location>
    </subcellularLocation>
</comment>
<comment type="PTM">
    <text evidence="1">Autophosphorylated.</text>
</comment>
<organism>
    <name type="scientific">Staphylococcus aureus (strain Newman)</name>
    <dbReference type="NCBI Taxonomy" id="426430"/>
    <lineage>
        <taxon>Bacteria</taxon>
        <taxon>Bacillati</taxon>
        <taxon>Bacillota</taxon>
        <taxon>Bacilli</taxon>
        <taxon>Bacillales</taxon>
        <taxon>Staphylococcaceae</taxon>
        <taxon>Staphylococcus</taxon>
    </lineage>
</organism>
<reference key="1">
    <citation type="journal article" date="2008" name="J. Bacteriol.">
        <title>Genome sequence of Staphylococcus aureus strain Newman and comparative analysis of staphylococcal genomes: polymorphism and evolution of two major pathogenicity islands.</title>
        <authorList>
            <person name="Baba T."/>
            <person name="Bae T."/>
            <person name="Schneewind O."/>
            <person name="Takeuchi F."/>
            <person name="Hiramatsu K."/>
        </authorList>
    </citation>
    <scope>NUCLEOTIDE SEQUENCE [LARGE SCALE GENOMIC DNA]</scope>
    <source>
        <strain>Newman</strain>
    </source>
</reference>
<feature type="chain" id="PRO_0000349335" description="Oxygen sensor histidine kinase NreB">
    <location>
        <begin position="1"/>
        <end position="344"/>
    </location>
</feature>
<feature type="domain" description="Histidine kinase" evidence="3">
    <location>
        <begin position="152"/>
        <end position="344"/>
    </location>
</feature>
<feature type="binding site" evidence="2">
    <location>
        <position position="58"/>
    </location>
    <ligand>
        <name>[4Fe-4S] cluster</name>
        <dbReference type="ChEBI" id="CHEBI:49883"/>
    </ligand>
</feature>
<feature type="binding site" evidence="2">
    <location>
        <position position="61"/>
    </location>
    <ligand>
        <name>[4Fe-4S] cluster</name>
        <dbReference type="ChEBI" id="CHEBI:49883"/>
    </ligand>
</feature>
<feature type="binding site" evidence="2">
    <location>
        <position position="73"/>
    </location>
    <ligand>
        <name>[4Fe-4S] cluster</name>
        <dbReference type="ChEBI" id="CHEBI:49883"/>
    </ligand>
</feature>
<feature type="binding site" evidence="2">
    <location>
        <position position="76"/>
    </location>
    <ligand>
        <name>[4Fe-4S] cluster</name>
        <dbReference type="ChEBI" id="CHEBI:49883"/>
    </ligand>
</feature>
<feature type="modified residue" description="Phosphohistidine; by autocatalysis" evidence="3">
    <location>
        <position position="158"/>
    </location>
</feature>
<sequence>MINEDSIQLDTLLKKYYEHSIEKIVFADDNGKIIAMNDAAKDILSEEDNYSAVANAICHRCEGYTNAYDVQSCKDCFLESMQVQATNFQVFMKTKDQKVMPFTATYQLIDQDRGIHAFTLQNVSSQIEQQEKLHQQRMMRKTISAQENERKRISRELHDSVIQEMLNVDVQLRLLKYQEDTTKLLEDAENIEYIVAKLIDDIRNMSVELRPASLDDLGLEAAFKSYFKQFEENYGIKIIYTSNIKNTRFDSDIETVVYRVVQEAILNALKYADVNEINVGIRQTGRHLVAEVIDAGNGFDPSSKPKGSGLGLYGMNERAELVSGSVNIETKIGEGTNVTLNIPI</sequence>
<name>NREB_STAAE</name>
<dbReference type="EC" id="2.7.13.3"/>
<dbReference type="EMBL" id="AP009351">
    <property type="protein sequence ID" value="BAF68564.1"/>
    <property type="molecule type" value="Genomic_DNA"/>
</dbReference>
<dbReference type="RefSeq" id="WP_000606546.1">
    <property type="nucleotide sequence ID" value="NZ_JBBIAE010000004.1"/>
</dbReference>
<dbReference type="SMR" id="A6QJN2"/>
<dbReference type="KEGG" id="sae:NWMN_2292"/>
<dbReference type="HOGENOM" id="CLU_000445_114_0_9"/>
<dbReference type="Proteomes" id="UP000006386">
    <property type="component" value="Chromosome"/>
</dbReference>
<dbReference type="GO" id="GO:0005737">
    <property type="term" value="C:cytoplasm"/>
    <property type="evidence" value="ECO:0007669"/>
    <property type="project" value="UniProtKB-SubCell"/>
</dbReference>
<dbReference type="GO" id="GO:0016020">
    <property type="term" value="C:membrane"/>
    <property type="evidence" value="ECO:0007669"/>
    <property type="project" value="InterPro"/>
</dbReference>
<dbReference type="GO" id="GO:0051539">
    <property type="term" value="F:4 iron, 4 sulfur cluster binding"/>
    <property type="evidence" value="ECO:0007669"/>
    <property type="project" value="UniProtKB-KW"/>
</dbReference>
<dbReference type="GO" id="GO:0005524">
    <property type="term" value="F:ATP binding"/>
    <property type="evidence" value="ECO:0007669"/>
    <property type="project" value="UniProtKB-KW"/>
</dbReference>
<dbReference type="GO" id="GO:0005506">
    <property type="term" value="F:iron ion binding"/>
    <property type="evidence" value="ECO:0007669"/>
    <property type="project" value="InterPro"/>
</dbReference>
<dbReference type="GO" id="GO:0000155">
    <property type="term" value="F:phosphorelay sensor kinase activity"/>
    <property type="evidence" value="ECO:0007669"/>
    <property type="project" value="InterPro"/>
</dbReference>
<dbReference type="GO" id="GO:0046983">
    <property type="term" value="F:protein dimerization activity"/>
    <property type="evidence" value="ECO:0007669"/>
    <property type="project" value="InterPro"/>
</dbReference>
<dbReference type="CDD" id="cd16917">
    <property type="entry name" value="HATPase_UhpB-NarQ-NarX-like"/>
    <property type="match status" value="1"/>
</dbReference>
<dbReference type="Gene3D" id="1.20.5.1930">
    <property type="match status" value="1"/>
</dbReference>
<dbReference type="Gene3D" id="3.30.565.10">
    <property type="entry name" value="Histidine kinase-like ATPase, C-terminal domain"/>
    <property type="match status" value="1"/>
</dbReference>
<dbReference type="InterPro" id="IPR036890">
    <property type="entry name" value="HATPase_C_sf"/>
</dbReference>
<dbReference type="InterPro" id="IPR005467">
    <property type="entry name" value="His_kinase_dom"/>
</dbReference>
<dbReference type="InterPro" id="IPR050482">
    <property type="entry name" value="Sensor_HK_TwoCompSys"/>
</dbReference>
<dbReference type="InterPro" id="IPR004358">
    <property type="entry name" value="Sig_transdc_His_kin-like_C"/>
</dbReference>
<dbReference type="InterPro" id="IPR011712">
    <property type="entry name" value="Sig_transdc_His_kin_sub3_dim/P"/>
</dbReference>
<dbReference type="InterPro" id="IPR017203">
    <property type="entry name" value="Sig_transdc_His_kinase_NreB"/>
</dbReference>
<dbReference type="PANTHER" id="PTHR24421">
    <property type="entry name" value="NITRATE/NITRITE SENSOR PROTEIN NARX-RELATED"/>
    <property type="match status" value="1"/>
</dbReference>
<dbReference type="PANTHER" id="PTHR24421:SF10">
    <property type="entry name" value="NITRATE_NITRITE SENSOR PROTEIN NARQ"/>
    <property type="match status" value="1"/>
</dbReference>
<dbReference type="Pfam" id="PF02518">
    <property type="entry name" value="HATPase_c"/>
    <property type="match status" value="1"/>
</dbReference>
<dbReference type="Pfam" id="PF07730">
    <property type="entry name" value="HisKA_3"/>
    <property type="match status" value="1"/>
</dbReference>
<dbReference type="PIRSF" id="PIRSF037432">
    <property type="entry name" value="STHK_NreB"/>
    <property type="match status" value="1"/>
</dbReference>
<dbReference type="PRINTS" id="PR00344">
    <property type="entry name" value="BCTRLSENSOR"/>
</dbReference>
<dbReference type="SMART" id="SM00387">
    <property type="entry name" value="HATPase_c"/>
    <property type="match status" value="1"/>
</dbReference>
<dbReference type="SUPFAM" id="SSF55874">
    <property type="entry name" value="ATPase domain of HSP90 chaperone/DNA topoisomerase II/histidine kinase"/>
    <property type="match status" value="1"/>
</dbReference>
<dbReference type="PROSITE" id="PS50109">
    <property type="entry name" value="HIS_KIN"/>
    <property type="match status" value="1"/>
</dbReference>
<gene>
    <name type="primary">nreB</name>
    <name type="ordered locus">NWMN_2292</name>
</gene>